<protein>
    <recommendedName>
        <fullName evidence="1">Thiamine import ATP-binding protein ThiQ</fullName>
        <ecNumber evidence="1">7.6.2.15</ecNumber>
    </recommendedName>
</protein>
<reference key="1">
    <citation type="submission" date="2002-12" db="EMBL/GenBank/DDBJ databases">
        <title>Complete genome sequence of Vibrio vulnificus CMCP6.</title>
        <authorList>
            <person name="Rhee J.H."/>
            <person name="Kim S.Y."/>
            <person name="Chung S.S."/>
            <person name="Kim J.J."/>
            <person name="Moon Y.H."/>
            <person name="Jeong H."/>
            <person name="Choy H.E."/>
        </authorList>
    </citation>
    <scope>NUCLEOTIDE SEQUENCE [LARGE SCALE GENOMIC DNA]</scope>
    <source>
        <strain>CMCP6</strain>
    </source>
</reference>
<evidence type="ECO:0000255" key="1">
    <source>
        <dbReference type="HAMAP-Rule" id="MF_01723"/>
    </source>
</evidence>
<dbReference type="EC" id="7.6.2.15" evidence="1"/>
<dbReference type="EMBL" id="AE016795">
    <property type="protein sequence ID" value="AAO09212.1"/>
    <property type="molecule type" value="Genomic_DNA"/>
</dbReference>
<dbReference type="RefSeq" id="WP_011078778.1">
    <property type="nucleotide sequence ID" value="NC_004459.3"/>
</dbReference>
<dbReference type="SMR" id="Q8DE95"/>
<dbReference type="KEGG" id="vvu:VV1_0701"/>
<dbReference type="HOGENOM" id="CLU_000604_1_22_6"/>
<dbReference type="Proteomes" id="UP000002275">
    <property type="component" value="Chromosome 1"/>
</dbReference>
<dbReference type="GO" id="GO:0005886">
    <property type="term" value="C:plasma membrane"/>
    <property type="evidence" value="ECO:0007669"/>
    <property type="project" value="UniProtKB-SubCell"/>
</dbReference>
<dbReference type="GO" id="GO:0048502">
    <property type="term" value="F:ABC-type thiamine transporter activity"/>
    <property type="evidence" value="ECO:0007669"/>
    <property type="project" value="UniProtKB-EC"/>
</dbReference>
<dbReference type="GO" id="GO:0005524">
    <property type="term" value="F:ATP binding"/>
    <property type="evidence" value="ECO:0007669"/>
    <property type="project" value="UniProtKB-KW"/>
</dbReference>
<dbReference type="GO" id="GO:0016887">
    <property type="term" value="F:ATP hydrolysis activity"/>
    <property type="evidence" value="ECO:0007669"/>
    <property type="project" value="InterPro"/>
</dbReference>
<dbReference type="Gene3D" id="3.40.50.300">
    <property type="entry name" value="P-loop containing nucleotide triphosphate hydrolases"/>
    <property type="match status" value="1"/>
</dbReference>
<dbReference type="InterPro" id="IPR003593">
    <property type="entry name" value="AAA+_ATPase"/>
</dbReference>
<dbReference type="InterPro" id="IPR050093">
    <property type="entry name" value="ABC_SmlMolc_Importer"/>
</dbReference>
<dbReference type="InterPro" id="IPR003439">
    <property type="entry name" value="ABC_transporter-like_ATP-bd"/>
</dbReference>
<dbReference type="InterPro" id="IPR017871">
    <property type="entry name" value="ABC_transporter-like_CS"/>
</dbReference>
<dbReference type="InterPro" id="IPR027417">
    <property type="entry name" value="P-loop_NTPase"/>
</dbReference>
<dbReference type="InterPro" id="IPR005968">
    <property type="entry name" value="Thiamine_ABC_ThiQ"/>
</dbReference>
<dbReference type="NCBIfam" id="NF008039">
    <property type="entry name" value="PRK10771.1"/>
    <property type="match status" value="1"/>
</dbReference>
<dbReference type="NCBIfam" id="TIGR01277">
    <property type="entry name" value="thiQ"/>
    <property type="match status" value="1"/>
</dbReference>
<dbReference type="PANTHER" id="PTHR42781">
    <property type="entry name" value="SPERMIDINE/PUTRESCINE IMPORT ATP-BINDING PROTEIN POTA"/>
    <property type="match status" value="1"/>
</dbReference>
<dbReference type="PANTHER" id="PTHR42781:SF1">
    <property type="entry name" value="THIAMINE IMPORT ATP-BINDING PROTEIN THIQ"/>
    <property type="match status" value="1"/>
</dbReference>
<dbReference type="Pfam" id="PF00005">
    <property type="entry name" value="ABC_tran"/>
    <property type="match status" value="1"/>
</dbReference>
<dbReference type="SMART" id="SM00382">
    <property type="entry name" value="AAA"/>
    <property type="match status" value="1"/>
</dbReference>
<dbReference type="SUPFAM" id="SSF52540">
    <property type="entry name" value="P-loop containing nucleoside triphosphate hydrolases"/>
    <property type="match status" value="1"/>
</dbReference>
<dbReference type="PROSITE" id="PS00211">
    <property type="entry name" value="ABC_TRANSPORTER_1"/>
    <property type="match status" value="1"/>
</dbReference>
<dbReference type="PROSITE" id="PS50893">
    <property type="entry name" value="ABC_TRANSPORTER_2"/>
    <property type="match status" value="1"/>
</dbReference>
<dbReference type="PROSITE" id="PS51288">
    <property type="entry name" value="THIQ"/>
    <property type="match status" value="1"/>
</dbReference>
<sequence>MLTLQQVHYYYHQDLFAFDLEVEAGSIVALMGPSGAGKSTLLALLAGFIAPQSGQMALDGRLLNTLSPAQRPFSMLFQEHNLFAHLTVRDNIALGLHPGLKLTSQQQKQVEQAAKQVGIEAYLDRLPEQLSGGQRQRVALARCFVQPNPIWLLDEPFSALDPVLRDEMLSLVKQLAQERAITVLMVTHHLSDARAIASHFAYIDKGTIAAHGPIASLNEKHSHPELVEFFQAAV</sequence>
<comment type="function">
    <text evidence="1">Part of the ABC transporter complex ThiBPQ involved in thiamine import. Responsible for energy coupling to the transport system.</text>
</comment>
<comment type="catalytic activity">
    <reaction evidence="1">
        <text>thiamine(out) + ATP + H2O = thiamine(in) + ADP + phosphate + H(+)</text>
        <dbReference type="Rhea" id="RHEA:29811"/>
        <dbReference type="ChEBI" id="CHEBI:15377"/>
        <dbReference type="ChEBI" id="CHEBI:15378"/>
        <dbReference type="ChEBI" id="CHEBI:18385"/>
        <dbReference type="ChEBI" id="CHEBI:30616"/>
        <dbReference type="ChEBI" id="CHEBI:43474"/>
        <dbReference type="ChEBI" id="CHEBI:456216"/>
        <dbReference type="EC" id="7.6.2.15"/>
    </reaction>
</comment>
<comment type="subunit">
    <text evidence="1">The complex is composed of two ATP-binding proteins (ThiQ), two transmembrane proteins (ThiP) and a solute-binding protein (ThiB).</text>
</comment>
<comment type="subcellular location">
    <subcellularLocation>
        <location evidence="1">Cell inner membrane</location>
        <topology evidence="1">Peripheral membrane protein</topology>
    </subcellularLocation>
</comment>
<comment type="similarity">
    <text evidence="1">Belongs to the ABC transporter superfamily. Thiamine importer (TC 3.A.1.19.1) family.</text>
</comment>
<accession>Q8DE95</accession>
<gene>
    <name evidence="1" type="primary">thiQ</name>
    <name type="ordered locus">VV1_0701</name>
</gene>
<feature type="chain" id="PRO_0000274468" description="Thiamine import ATP-binding protein ThiQ">
    <location>
        <begin position="1"/>
        <end position="234"/>
    </location>
</feature>
<feature type="domain" description="ABC transporter" evidence="1">
    <location>
        <begin position="2"/>
        <end position="230"/>
    </location>
</feature>
<feature type="binding site" evidence="1">
    <location>
        <begin position="32"/>
        <end position="39"/>
    </location>
    <ligand>
        <name>ATP</name>
        <dbReference type="ChEBI" id="CHEBI:30616"/>
    </ligand>
</feature>
<proteinExistence type="inferred from homology"/>
<name>THIQ_VIBVU</name>
<organism>
    <name type="scientific">Vibrio vulnificus (strain CMCP6)</name>
    <dbReference type="NCBI Taxonomy" id="216895"/>
    <lineage>
        <taxon>Bacteria</taxon>
        <taxon>Pseudomonadati</taxon>
        <taxon>Pseudomonadota</taxon>
        <taxon>Gammaproteobacteria</taxon>
        <taxon>Vibrionales</taxon>
        <taxon>Vibrionaceae</taxon>
        <taxon>Vibrio</taxon>
    </lineage>
</organism>
<keyword id="KW-0067">ATP-binding</keyword>
<keyword id="KW-0997">Cell inner membrane</keyword>
<keyword id="KW-1003">Cell membrane</keyword>
<keyword id="KW-0472">Membrane</keyword>
<keyword id="KW-0547">Nucleotide-binding</keyword>
<keyword id="KW-1278">Translocase</keyword>
<keyword id="KW-0813">Transport</keyword>